<feature type="chain" id="PRO_0000298476" description="NADH-quinone oxidoreductase subunit I">
    <location>
        <begin position="1"/>
        <end position="180"/>
    </location>
</feature>
<feature type="domain" description="4Fe-4S ferredoxin-type 1" evidence="1">
    <location>
        <begin position="48"/>
        <end position="80"/>
    </location>
</feature>
<feature type="domain" description="4Fe-4S ferredoxin-type 2" evidence="1">
    <location>
        <begin position="90"/>
        <end position="119"/>
    </location>
</feature>
<feature type="region of interest" description="Disordered" evidence="2">
    <location>
        <begin position="161"/>
        <end position="180"/>
    </location>
</feature>
<feature type="compositionally biased region" description="Basic and acidic residues" evidence="2">
    <location>
        <begin position="161"/>
        <end position="174"/>
    </location>
</feature>
<feature type="binding site" evidence="1">
    <location>
        <position position="60"/>
    </location>
    <ligand>
        <name>[4Fe-4S] cluster</name>
        <dbReference type="ChEBI" id="CHEBI:49883"/>
        <label>1</label>
    </ligand>
</feature>
<feature type="binding site" evidence="1">
    <location>
        <position position="63"/>
    </location>
    <ligand>
        <name>[4Fe-4S] cluster</name>
        <dbReference type="ChEBI" id="CHEBI:49883"/>
        <label>1</label>
    </ligand>
</feature>
<feature type="binding site" evidence="1">
    <location>
        <position position="66"/>
    </location>
    <ligand>
        <name>[4Fe-4S] cluster</name>
        <dbReference type="ChEBI" id="CHEBI:49883"/>
        <label>1</label>
    </ligand>
</feature>
<feature type="binding site" evidence="1">
    <location>
        <position position="70"/>
    </location>
    <ligand>
        <name>[4Fe-4S] cluster</name>
        <dbReference type="ChEBI" id="CHEBI:49883"/>
        <label>2</label>
    </ligand>
</feature>
<feature type="binding site" evidence="1">
    <location>
        <position position="99"/>
    </location>
    <ligand>
        <name>[4Fe-4S] cluster</name>
        <dbReference type="ChEBI" id="CHEBI:49883"/>
        <label>2</label>
    </ligand>
</feature>
<feature type="binding site" evidence="1">
    <location>
        <position position="102"/>
    </location>
    <ligand>
        <name>[4Fe-4S] cluster</name>
        <dbReference type="ChEBI" id="CHEBI:49883"/>
        <label>2</label>
    </ligand>
</feature>
<feature type="binding site" evidence="1">
    <location>
        <position position="105"/>
    </location>
    <ligand>
        <name>[4Fe-4S] cluster</name>
        <dbReference type="ChEBI" id="CHEBI:49883"/>
        <label>2</label>
    </ligand>
</feature>
<feature type="binding site" evidence="1">
    <location>
        <position position="109"/>
    </location>
    <ligand>
        <name>[4Fe-4S] cluster</name>
        <dbReference type="ChEBI" id="CHEBI:49883"/>
        <label>1</label>
    </ligand>
</feature>
<proteinExistence type="inferred from homology"/>
<sequence>MKIINIIKGVGTQLRSLGMVFSHAWSPRETLNYPEQAVYAAPRYRGRIVLTRDPDGDERCVACNLCAVACPVGCISLQKSEREDGRWYPEFFRINFSRCIFCGLCEEACPTTAIQLTPDFEMGEYRRQDLVYEKEDLLISGPGKYPDYNFYRMSGMAIDGKPKGDAENEAKPIDVKSLLP</sequence>
<organism>
    <name type="scientific">Aeromonas hydrophila subsp. hydrophila (strain ATCC 7966 / DSM 30187 / BCRC 13018 / CCUG 14551 / JCM 1027 / KCTC 2358 / NCIMB 9240 / NCTC 8049)</name>
    <dbReference type="NCBI Taxonomy" id="380703"/>
    <lineage>
        <taxon>Bacteria</taxon>
        <taxon>Pseudomonadati</taxon>
        <taxon>Pseudomonadota</taxon>
        <taxon>Gammaproteobacteria</taxon>
        <taxon>Aeromonadales</taxon>
        <taxon>Aeromonadaceae</taxon>
        <taxon>Aeromonas</taxon>
    </lineage>
</organism>
<reference key="1">
    <citation type="journal article" date="2006" name="J. Bacteriol.">
        <title>Genome sequence of Aeromonas hydrophila ATCC 7966T: jack of all trades.</title>
        <authorList>
            <person name="Seshadri R."/>
            <person name="Joseph S.W."/>
            <person name="Chopra A.K."/>
            <person name="Sha J."/>
            <person name="Shaw J."/>
            <person name="Graf J."/>
            <person name="Haft D.H."/>
            <person name="Wu M."/>
            <person name="Ren Q."/>
            <person name="Rosovitz M.J."/>
            <person name="Madupu R."/>
            <person name="Tallon L."/>
            <person name="Kim M."/>
            <person name="Jin S."/>
            <person name="Vuong H."/>
            <person name="Stine O.C."/>
            <person name="Ali A."/>
            <person name="Horneman A.J."/>
            <person name="Heidelberg J.F."/>
        </authorList>
    </citation>
    <scope>NUCLEOTIDE SEQUENCE [LARGE SCALE GENOMIC DNA]</scope>
    <source>
        <strain>ATCC 7966 / DSM 30187 / BCRC 13018 / CCUG 14551 / JCM 1027 / KCTC 2358 / NCIMB 9240 / NCTC 8049</strain>
    </source>
</reference>
<keyword id="KW-0004">4Fe-4S</keyword>
<keyword id="KW-0997">Cell inner membrane</keyword>
<keyword id="KW-1003">Cell membrane</keyword>
<keyword id="KW-0408">Iron</keyword>
<keyword id="KW-0411">Iron-sulfur</keyword>
<keyword id="KW-0472">Membrane</keyword>
<keyword id="KW-0479">Metal-binding</keyword>
<keyword id="KW-0520">NAD</keyword>
<keyword id="KW-0874">Quinone</keyword>
<keyword id="KW-1185">Reference proteome</keyword>
<keyword id="KW-0677">Repeat</keyword>
<keyword id="KW-1278">Translocase</keyword>
<keyword id="KW-0830">Ubiquinone</keyword>
<dbReference type="EC" id="7.1.1.-" evidence="1"/>
<dbReference type="EMBL" id="CP000462">
    <property type="protein sequence ID" value="ABK36405.1"/>
    <property type="molecule type" value="Genomic_DNA"/>
</dbReference>
<dbReference type="RefSeq" id="WP_011705660.1">
    <property type="nucleotide sequence ID" value="NC_008570.1"/>
</dbReference>
<dbReference type="RefSeq" id="YP_856311.1">
    <property type="nucleotide sequence ID" value="NC_008570.1"/>
</dbReference>
<dbReference type="SMR" id="A0KJ60"/>
<dbReference type="STRING" id="380703.AHA_1775"/>
<dbReference type="EnsemblBacteria" id="ABK36405">
    <property type="protein sequence ID" value="ABK36405"/>
    <property type="gene ID" value="AHA_1775"/>
</dbReference>
<dbReference type="GeneID" id="4486793"/>
<dbReference type="KEGG" id="aha:AHA_1775"/>
<dbReference type="PATRIC" id="fig|380703.7.peg.1791"/>
<dbReference type="eggNOG" id="COG1143">
    <property type="taxonomic scope" value="Bacteria"/>
</dbReference>
<dbReference type="HOGENOM" id="CLU_067218_4_3_6"/>
<dbReference type="OrthoDB" id="9808559at2"/>
<dbReference type="Proteomes" id="UP000000756">
    <property type="component" value="Chromosome"/>
</dbReference>
<dbReference type="GO" id="GO:0005886">
    <property type="term" value="C:plasma membrane"/>
    <property type="evidence" value="ECO:0007669"/>
    <property type="project" value="UniProtKB-SubCell"/>
</dbReference>
<dbReference type="GO" id="GO:0051539">
    <property type="term" value="F:4 iron, 4 sulfur cluster binding"/>
    <property type="evidence" value="ECO:0007669"/>
    <property type="project" value="UniProtKB-KW"/>
</dbReference>
<dbReference type="GO" id="GO:0005506">
    <property type="term" value="F:iron ion binding"/>
    <property type="evidence" value="ECO:0007669"/>
    <property type="project" value="UniProtKB-UniRule"/>
</dbReference>
<dbReference type="GO" id="GO:0050136">
    <property type="term" value="F:NADH:ubiquinone reductase (non-electrogenic) activity"/>
    <property type="evidence" value="ECO:0007669"/>
    <property type="project" value="UniProtKB-UniRule"/>
</dbReference>
<dbReference type="GO" id="GO:0048038">
    <property type="term" value="F:quinone binding"/>
    <property type="evidence" value="ECO:0007669"/>
    <property type="project" value="UniProtKB-KW"/>
</dbReference>
<dbReference type="GO" id="GO:0009060">
    <property type="term" value="P:aerobic respiration"/>
    <property type="evidence" value="ECO:0007669"/>
    <property type="project" value="TreeGrafter"/>
</dbReference>
<dbReference type="FunFam" id="3.30.70.3270:FF:000002">
    <property type="entry name" value="NADH-quinone oxidoreductase subunit I"/>
    <property type="match status" value="1"/>
</dbReference>
<dbReference type="Gene3D" id="3.30.70.3270">
    <property type="match status" value="1"/>
</dbReference>
<dbReference type="HAMAP" id="MF_01351">
    <property type="entry name" value="NDH1_NuoI"/>
    <property type="match status" value="1"/>
</dbReference>
<dbReference type="InterPro" id="IPR017896">
    <property type="entry name" value="4Fe4S_Fe-S-bd"/>
</dbReference>
<dbReference type="InterPro" id="IPR017900">
    <property type="entry name" value="4Fe4S_Fe_S_CS"/>
</dbReference>
<dbReference type="InterPro" id="IPR010226">
    <property type="entry name" value="NADH_quinone_OxRdtase_chainI"/>
</dbReference>
<dbReference type="NCBIfam" id="TIGR01971">
    <property type="entry name" value="NuoI"/>
    <property type="match status" value="1"/>
</dbReference>
<dbReference type="NCBIfam" id="NF004536">
    <property type="entry name" value="PRK05888.1-1"/>
    <property type="match status" value="1"/>
</dbReference>
<dbReference type="PANTHER" id="PTHR10849:SF20">
    <property type="entry name" value="NADH DEHYDROGENASE [UBIQUINONE] IRON-SULFUR PROTEIN 8, MITOCHONDRIAL"/>
    <property type="match status" value="1"/>
</dbReference>
<dbReference type="PANTHER" id="PTHR10849">
    <property type="entry name" value="NADH DEHYDROGENASE UBIQUINONE IRON-SULFUR PROTEIN 8, MITOCHONDRIAL"/>
    <property type="match status" value="1"/>
</dbReference>
<dbReference type="Pfam" id="PF12838">
    <property type="entry name" value="Fer4_7"/>
    <property type="match status" value="1"/>
</dbReference>
<dbReference type="SUPFAM" id="SSF54862">
    <property type="entry name" value="4Fe-4S ferredoxins"/>
    <property type="match status" value="1"/>
</dbReference>
<dbReference type="PROSITE" id="PS00198">
    <property type="entry name" value="4FE4S_FER_1"/>
    <property type="match status" value="2"/>
</dbReference>
<dbReference type="PROSITE" id="PS51379">
    <property type="entry name" value="4FE4S_FER_2"/>
    <property type="match status" value="2"/>
</dbReference>
<name>NUOI_AERHH</name>
<comment type="function">
    <text evidence="1">NDH-1 shuttles electrons from NADH, via FMN and iron-sulfur (Fe-S) centers, to quinones in the respiratory chain. The immediate electron acceptor for the enzyme in this species is believed to be ubiquinone. Couples the redox reaction to proton translocation (for every two electrons transferred, four hydrogen ions are translocated across the cytoplasmic membrane), and thus conserves the redox energy in a proton gradient.</text>
</comment>
<comment type="catalytic activity">
    <reaction evidence="1">
        <text>a quinone + NADH + 5 H(+)(in) = a quinol + NAD(+) + 4 H(+)(out)</text>
        <dbReference type="Rhea" id="RHEA:57888"/>
        <dbReference type="ChEBI" id="CHEBI:15378"/>
        <dbReference type="ChEBI" id="CHEBI:24646"/>
        <dbReference type="ChEBI" id="CHEBI:57540"/>
        <dbReference type="ChEBI" id="CHEBI:57945"/>
        <dbReference type="ChEBI" id="CHEBI:132124"/>
    </reaction>
</comment>
<comment type="cofactor">
    <cofactor evidence="1">
        <name>[4Fe-4S] cluster</name>
        <dbReference type="ChEBI" id="CHEBI:49883"/>
    </cofactor>
    <text evidence="1">Binds 2 [4Fe-4S] clusters per subunit.</text>
</comment>
<comment type="subunit">
    <text evidence="1">NDH-1 is composed of 14 different subunits. Subunits NuoA, H, J, K, L, M, N constitute the membrane sector of the complex.</text>
</comment>
<comment type="subcellular location">
    <subcellularLocation>
        <location evidence="1">Cell inner membrane</location>
        <topology evidence="1">Peripheral membrane protein</topology>
    </subcellularLocation>
</comment>
<comment type="similarity">
    <text evidence="1">Belongs to the complex I 23 kDa subunit family.</text>
</comment>
<accession>A0KJ60</accession>
<gene>
    <name evidence="1" type="primary">nuoI</name>
    <name type="ordered locus">AHA_1775</name>
</gene>
<evidence type="ECO:0000255" key="1">
    <source>
        <dbReference type="HAMAP-Rule" id="MF_01351"/>
    </source>
</evidence>
<evidence type="ECO:0000256" key="2">
    <source>
        <dbReference type="SAM" id="MobiDB-lite"/>
    </source>
</evidence>
<protein>
    <recommendedName>
        <fullName evidence="1">NADH-quinone oxidoreductase subunit I</fullName>
        <ecNumber evidence="1">7.1.1.-</ecNumber>
    </recommendedName>
    <alternativeName>
        <fullName evidence="1">NADH dehydrogenase I subunit I</fullName>
    </alternativeName>
    <alternativeName>
        <fullName evidence="1">NDH-1 subunit I</fullName>
    </alternativeName>
</protein>